<dbReference type="EMBL" id="AY724852">
    <property type="protein sequence ID" value="AAU21082.1"/>
    <property type="molecule type" value="Genomic_DNA"/>
</dbReference>
<dbReference type="EMBL" id="AY677139">
    <property type="protein sequence ID" value="AAV28567.1"/>
    <property type="molecule type" value="Genomic_DNA"/>
</dbReference>
<dbReference type="RefSeq" id="XP_003829653.1">
    <property type="nucleotide sequence ID" value="XM_003829605.6"/>
</dbReference>
<dbReference type="SMR" id="Q646D7"/>
<dbReference type="STRING" id="9597.ENSPPAP00000004754"/>
<dbReference type="GlyCosmos" id="Q646D7">
    <property type="glycosylation" value="1 site, No reported glycans"/>
</dbReference>
<dbReference type="Ensembl" id="ENSPPAT00000021749.1">
    <property type="protein sequence ID" value="ENSPPAP00000004754.1"/>
    <property type="gene ID" value="ENSPPAG00000019846.1"/>
</dbReference>
<dbReference type="GeneID" id="100983738"/>
<dbReference type="KEGG" id="pps:100983738"/>
<dbReference type="CTD" id="50839"/>
<dbReference type="eggNOG" id="ENOG502T3AX">
    <property type="taxonomic scope" value="Eukaryota"/>
</dbReference>
<dbReference type="GeneTree" id="ENSGT01100000263477"/>
<dbReference type="OMA" id="WLFTFPQ"/>
<dbReference type="OrthoDB" id="13276at9604"/>
<dbReference type="Proteomes" id="UP000240080">
    <property type="component" value="Chromosome 12"/>
</dbReference>
<dbReference type="GO" id="GO:0005886">
    <property type="term" value="C:plasma membrane"/>
    <property type="evidence" value="ECO:0007669"/>
    <property type="project" value="UniProtKB-ARBA"/>
</dbReference>
<dbReference type="GO" id="GO:0033038">
    <property type="term" value="F:bitter taste receptor activity"/>
    <property type="evidence" value="ECO:0007669"/>
    <property type="project" value="Ensembl"/>
</dbReference>
<dbReference type="GO" id="GO:0004930">
    <property type="term" value="F:G protein-coupled receptor activity"/>
    <property type="evidence" value="ECO:0007669"/>
    <property type="project" value="UniProtKB-KW"/>
</dbReference>
<dbReference type="CDD" id="cd15021">
    <property type="entry name" value="7tm_TAS2R10"/>
    <property type="match status" value="1"/>
</dbReference>
<dbReference type="FunFam" id="1.20.1070.10:FF:000042">
    <property type="entry name" value="Taste receptor type 2 member 7"/>
    <property type="match status" value="1"/>
</dbReference>
<dbReference type="Gene3D" id="1.20.1070.10">
    <property type="entry name" value="Rhodopsin 7-helix transmembrane proteins"/>
    <property type="match status" value="1"/>
</dbReference>
<dbReference type="InterPro" id="IPR007960">
    <property type="entry name" value="TAS2R"/>
</dbReference>
<dbReference type="PANTHER" id="PTHR11394">
    <property type="entry name" value="TASTE RECEPTOR TYPE 2"/>
    <property type="match status" value="1"/>
</dbReference>
<dbReference type="PANTHER" id="PTHR11394:SF63">
    <property type="entry name" value="TASTE RECEPTOR TYPE 2 MEMBER 10"/>
    <property type="match status" value="1"/>
</dbReference>
<dbReference type="Pfam" id="PF05296">
    <property type="entry name" value="TAS2R"/>
    <property type="match status" value="1"/>
</dbReference>
<dbReference type="SUPFAM" id="SSF81321">
    <property type="entry name" value="Family A G protein-coupled receptor-like"/>
    <property type="match status" value="1"/>
</dbReference>
<organism>
    <name type="scientific">Pan paniscus</name>
    <name type="common">Pygmy chimpanzee</name>
    <name type="synonym">Bonobo</name>
    <dbReference type="NCBI Taxonomy" id="9597"/>
    <lineage>
        <taxon>Eukaryota</taxon>
        <taxon>Metazoa</taxon>
        <taxon>Chordata</taxon>
        <taxon>Craniata</taxon>
        <taxon>Vertebrata</taxon>
        <taxon>Euteleostomi</taxon>
        <taxon>Mammalia</taxon>
        <taxon>Eutheria</taxon>
        <taxon>Euarchontoglires</taxon>
        <taxon>Primates</taxon>
        <taxon>Haplorrhini</taxon>
        <taxon>Catarrhini</taxon>
        <taxon>Hominidae</taxon>
        <taxon>Pan</taxon>
    </lineage>
</organism>
<name>T2R10_PANPA</name>
<comment type="function">
    <text evidence="1">Receptor that may play a role in the perception of bitterness and is gustducin-linked. May play a role in sensing the chemical composition of the gastrointestinal content. The activity of this receptor may stimulate alpha gustducin, mediate PLC-beta-2 activation and lead to the gating of TRPM5 (By similarity).</text>
</comment>
<comment type="subcellular location">
    <subcellularLocation>
        <location>Membrane</location>
        <topology>Multi-pass membrane protein</topology>
    </subcellularLocation>
</comment>
<comment type="miscellaneous">
    <text>Most taste cells may be activated by a limited number of bitter compounds; individual taste cells can discriminate among bitter stimuli.</text>
</comment>
<comment type="similarity">
    <text evidence="3">Belongs to the G-protein coupled receptor T2R family.</text>
</comment>
<keyword id="KW-0297">G-protein coupled receptor</keyword>
<keyword id="KW-0325">Glycoprotein</keyword>
<keyword id="KW-0472">Membrane</keyword>
<keyword id="KW-0675">Receptor</keyword>
<keyword id="KW-1185">Reference proteome</keyword>
<keyword id="KW-0716">Sensory transduction</keyword>
<keyword id="KW-0919">Taste</keyword>
<keyword id="KW-0807">Transducer</keyword>
<keyword id="KW-0812">Transmembrane</keyword>
<keyword id="KW-1133">Transmembrane helix</keyword>
<proteinExistence type="inferred from homology"/>
<reference key="1">
    <citation type="journal article" date="2005" name="Mol. Biol. Evol.">
        <title>Evolution of bitter taste receptors in humans and apes.</title>
        <authorList>
            <person name="Fischer A."/>
            <person name="Gilad Y."/>
            <person name="Man O."/>
            <person name="Paeaebo S."/>
        </authorList>
    </citation>
    <scope>NUCLEOTIDE SEQUENCE [GENOMIC DNA]</scope>
</reference>
<reference key="2">
    <citation type="journal article" date="2004" name="Proc. Natl. Acad. Sci. U.S.A.">
        <title>Divergence of T2R chemosensory receptor families in humans, bonobos, and chimpanzees.</title>
        <authorList>
            <person name="Parry C.M."/>
            <person name="Erkner A."/>
            <person name="le Coutre J."/>
        </authorList>
    </citation>
    <scope>NUCLEOTIDE SEQUENCE [GENOMIC DNA]</scope>
</reference>
<gene>
    <name type="primary">TAS2R10</name>
</gene>
<sequence>MLRVVEGIFIFVVISESVFGVLGNGFIGLVNCIDCAKNKLSTIGFILTGLAISRIFLIWIIITDGFIQIFSPNIYASSNLIEYISYFWVIGNQSSMWFATSLSIFYFLKIANFSNYIFLWLKSRTNMVLPFMIVFLLISSLLNFAYIAKILNDYKMKNDTVWDLNMYKSEYFIKQILLNLGVIFFFTLSLITCVLLIISLWRHNRQMQSNVTGLRDSNTEAHVKAMKVLISFIILFILYFIGMAIEISYFTVRENKLLLMFGMTTTAIYPWGHSFILILGNSKLKQASLRVLQQLKCCEKRKNLRVT</sequence>
<protein>
    <recommendedName>
        <fullName>Taste receptor type 2 member 10</fullName>
        <shortName>T2R10</shortName>
    </recommendedName>
</protein>
<feature type="chain" id="PRO_0000082239" description="Taste receptor type 2 member 10">
    <location>
        <begin position="1"/>
        <end position="307"/>
    </location>
</feature>
<feature type="topological domain" description="Extracellular" evidence="2">
    <location>
        <begin position="1"/>
        <end position="6"/>
    </location>
</feature>
<feature type="transmembrane region" description="Helical; Name=1" evidence="2">
    <location>
        <begin position="7"/>
        <end position="27"/>
    </location>
</feature>
<feature type="topological domain" description="Cytoplasmic" evidence="2">
    <location>
        <begin position="28"/>
        <end position="42"/>
    </location>
</feature>
<feature type="transmembrane region" description="Helical; Name=2" evidence="2">
    <location>
        <begin position="43"/>
        <end position="63"/>
    </location>
</feature>
<feature type="topological domain" description="Extracellular" evidence="2">
    <location>
        <begin position="64"/>
        <end position="100"/>
    </location>
</feature>
<feature type="transmembrane region" description="Helical; Name=3" evidence="2">
    <location>
        <begin position="101"/>
        <end position="121"/>
    </location>
</feature>
<feature type="topological domain" description="Cytoplasmic" evidence="2">
    <location>
        <begin position="122"/>
        <end position="126"/>
    </location>
</feature>
<feature type="transmembrane region" description="Helical; Name=4" evidence="2">
    <location>
        <begin position="127"/>
        <end position="147"/>
    </location>
</feature>
<feature type="topological domain" description="Extracellular" evidence="2">
    <location>
        <begin position="148"/>
        <end position="179"/>
    </location>
</feature>
<feature type="transmembrane region" description="Helical; Name=5" evidence="2">
    <location>
        <begin position="180"/>
        <end position="200"/>
    </location>
</feature>
<feature type="topological domain" description="Cytoplasmic" evidence="2">
    <location>
        <begin position="201"/>
        <end position="227"/>
    </location>
</feature>
<feature type="transmembrane region" description="Helical; Name=6" evidence="2">
    <location>
        <begin position="228"/>
        <end position="248"/>
    </location>
</feature>
<feature type="topological domain" description="Extracellular" evidence="2">
    <location>
        <begin position="249"/>
        <end position="257"/>
    </location>
</feature>
<feature type="transmembrane region" description="Helical; Name=7" evidence="2">
    <location>
        <begin position="258"/>
        <end position="278"/>
    </location>
</feature>
<feature type="topological domain" description="Cytoplasmic" evidence="2">
    <location>
        <begin position="279"/>
        <end position="307"/>
    </location>
</feature>
<feature type="glycosylation site" description="N-linked (GlcNAc...) asparagine" evidence="2">
    <location>
        <position position="158"/>
    </location>
</feature>
<evidence type="ECO:0000250" key="1"/>
<evidence type="ECO:0000255" key="2"/>
<evidence type="ECO:0000305" key="3"/>
<accession>Q646D7</accession>